<accession>B7ZSG3</accession>
<accession>Q788P8</accession>
<accession>Q91657</accession>
<evidence type="ECO:0000250" key="1">
    <source>
        <dbReference type="UniProtKB" id="P19544"/>
    </source>
</evidence>
<evidence type="ECO:0000250" key="2">
    <source>
        <dbReference type="UniProtKB" id="P22561"/>
    </source>
</evidence>
<evidence type="ECO:0000255" key="3"/>
<evidence type="ECO:0000255" key="4">
    <source>
        <dbReference type="PROSITE-ProRule" id="PRU00042"/>
    </source>
</evidence>
<evidence type="ECO:0000269" key="5">
    <source>
    </source>
</evidence>
<evidence type="ECO:0000269" key="6">
    <source>
    </source>
</evidence>
<evidence type="ECO:0000269" key="7">
    <source>
    </source>
</evidence>
<evidence type="ECO:0000269" key="8">
    <source>
    </source>
</evidence>
<evidence type="ECO:0000269" key="9">
    <source>
    </source>
</evidence>
<evidence type="ECO:0000269" key="10">
    <source>
    </source>
</evidence>
<evidence type="ECO:0000269" key="11">
    <source>
    </source>
</evidence>
<evidence type="ECO:0000269" key="12">
    <source>
    </source>
</evidence>
<evidence type="ECO:0000269" key="13">
    <source>
    </source>
</evidence>
<evidence type="ECO:0000303" key="14">
    <source>
    </source>
</evidence>
<evidence type="ECO:0000303" key="15">
    <source>
    </source>
</evidence>
<evidence type="ECO:0000305" key="16"/>
<evidence type="ECO:0000312" key="17">
    <source>
        <dbReference type="EMBL" id="AAB53152.1"/>
    </source>
</evidence>
<evidence type="ECO:0000312" key="18">
    <source>
        <dbReference type="EMBL" id="AAI70513.1"/>
    </source>
</evidence>
<evidence type="ECO:0000312" key="19">
    <source>
        <dbReference type="EMBL" id="CAA59738.1"/>
    </source>
</evidence>
<protein>
    <recommendedName>
        <fullName>Wilms tumor protein homolog A</fullName>
        <shortName evidence="14">XWT1a</shortName>
        <shortName evidence="15">xWT1</shortName>
    </recommendedName>
</protein>
<keyword id="KW-0025">Alternative splicing</keyword>
<keyword id="KW-0963">Cytoplasm</keyword>
<keyword id="KW-0217">Developmental protein</keyword>
<keyword id="KW-0238">DNA-binding</keyword>
<keyword id="KW-1017">Isopeptide bond</keyword>
<keyword id="KW-0479">Metal-binding</keyword>
<keyword id="KW-0539">Nucleus</keyword>
<keyword id="KW-1185">Reference proteome</keyword>
<keyword id="KW-0677">Repeat</keyword>
<keyword id="KW-0691">RNA editing</keyword>
<keyword id="KW-0694">RNA-binding</keyword>
<keyword id="KW-0804">Transcription</keyword>
<keyword id="KW-0805">Transcription regulation</keyword>
<keyword id="KW-0043">Tumor suppressor</keyword>
<keyword id="KW-0832">Ubl conjugation</keyword>
<keyword id="KW-0879">Wnt signaling pathway</keyword>
<keyword id="KW-0862">Zinc</keyword>
<keyword id="KW-0863">Zinc-finger</keyword>
<proteinExistence type="evidence at transcript level"/>
<name>WT1A_XENLA</name>
<organism>
    <name type="scientific">Xenopus laevis</name>
    <name type="common">African clawed frog</name>
    <dbReference type="NCBI Taxonomy" id="8355"/>
    <lineage>
        <taxon>Eukaryota</taxon>
        <taxon>Metazoa</taxon>
        <taxon>Chordata</taxon>
        <taxon>Craniata</taxon>
        <taxon>Vertebrata</taxon>
        <taxon>Euteleostomi</taxon>
        <taxon>Amphibia</taxon>
        <taxon>Batrachia</taxon>
        <taxon>Anura</taxon>
        <taxon>Pipoidea</taxon>
        <taxon>Pipidae</taxon>
        <taxon>Xenopodinae</taxon>
        <taxon>Xenopus</taxon>
        <taxon>Xenopus</taxon>
    </lineage>
</organism>
<gene>
    <name type="primary">wt1-a</name>
    <name type="synonym">wt1</name>
</gene>
<dbReference type="EMBL" id="U42011">
    <property type="protein sequence ID" value="AAB53152.1"/>
    <property type="status" value="ALT_FRAME"/>
    <property type="molecule type" value="mRNA"/>
</dbReference>
<dbReference type="EMBL" id="BC170513">
    <property type="protein sequence ID" value="AAI70513.1"/>
    <property type="molecule type" value="mRNA"/>
</dbReference>
<dbReference type="EMBL" id="X85733">
    <property type="protein sequence ID" value="CAA59738.1"/>
    <property type="molecule type" value="mRNA"/>
</dbReference>
<dbReference type="RefSeq" id="NP_001079057.1">
    <property type="nucleotide sequence ID" value="NM_001085588.1"/>
</dbReference>
<dbReference type="BMRB" id="B7ZSG3"/>
<dbReference type="SMR" id="B7ZSG3"/>
<dbReference type="GeneID" id="373588"/>
<dbReference type="KEGG" id="xla:373588"/>
<dbReference type="AGR" id="Xenbase:XB-GENE-864792"/>
<dbReference type="CTD" id="373588"/>
<dbReference type="Xenbase" id="XB-GENE-864792">
    <property type="gene designation" value="wt1.S"/>
</dbReference>
<dbReference type="OMA" id="PACCMST"/>
<dbReference type="OrthoDB" id="8922241at2759"/>
<dbReference type="Proteomes" id="UP000186698">
    <property type="component" value="Chromosome 4S"/>
</dbReference>
<dbReference type="Bgee" id="373588">
    <property type="expression patterns" value="Expressed in spleen and 11 other cell types or tissues"/>
</dbReference>
<dbReference type="GO" id="GO:0005737">
    <property type="term" value="C:cytoplasm"/>
    <property type="evidence" value="ECO:0007669"/>
    <property type="project" value="UniProtKB-SubCell"/>
</dbReference>
<dbReference type="GO" id="GO:0016607">
    <property type="term" value="C:nuclear speck"/>
    <property type="evidence" value="ECO:0007669"/>
    <property type="project" value="UniProtKB-SubCell"/>
</dbReference>
<dbReference type="GO" id="GO:0000981">
    <property type="term" value="F:DNA-binding transcription factor activity, RNA polymerase II-specific"/>
    <property type="evidence" value="ECO:0000318"/>
    <property type="project" value="GO_Central"/>
</dbReference>
<dbReference type="GO" id="GO:0010385">
    <property type="term" value="F:double-stranded methylated DNA binding"/>
    <property type="evidence" value="ECO:0000250"/>
    <property type="project" value="UniProtKB"/>
</dbReference>
<dbReference type="GO" id="GO:0044729">
    <property type="term" value="F:hemi-methylated DNA-binding"/>
    <property type="evidence" value="ECO:0000250"/>
    <property type="project" value="UniProtKB"/>
</dbReference>
<dbReference type="GO" id="GO:0003723">
    <property type="term" value="F:RNA binding"/>
    <property type="evidence" value="ECO:0007669"/>
    <property type="project" value="UniProtKB-KW"/>
</dbReference>
<dbReference type="GO" id="GO:0000978">
    <property type="term" value="F:RNA polymerase II cis-regulatory region sequence-specific DNA binding"/>
    <property type="evidence" value="ECO:0000318"/>
    <property type="project" value="GO_Central"/>
</dbReference>
<dbReference type="GO" id="GO:0043565">
    <property type="term" value="F:sequence-specific DNA binding"/>
    <property type="evidence" value="ECO:0000250"/>
    <property type="project" value="UniProtKB"/>
</dbReference>
<dbReference type="GO" id="GO:0008270">
    <property type="term" value="F:zinc ion binding"/>
    <property type="evidence" value="ECO:0000250"/>
    <property type="project" value="UniProtKB"/>
</dbReference>
<dbReference type="GO" id="GO:0072013">
    <property type="term" value="P:glomus development"/>
    <property type="evidence" value="ECO:0000315"/>
    <property type="project" value="UniProtKB"/>
</dbReference>
<dbReference type="GO" id="GO:0061440">
    <property type="term" value="P:kidney vasculature development"/>
    <property type="evidence" value="ECO:0000304"/>
    <property type="project" value="AgBase"/>
</dbReference>
<dbReference type="GO" id="GO:0043066">
    <property type="term" value="P:negative regulation of apoptotic process"/>
    <property type="evidence" value="ECO:0000318"/>
    <property type="project" value="GO_Central"/>
</dbReference>
<dbReference type="GO" id="GO:0008285">
    <property type="term" value="P:negative regulation of cell population proliferation"/>
    <property type="evidence" value="ECO:0000318"/>
    <property type="project" value="GO_Central"/>
</dbReference>
<dbReference type="GO" id="GO:1900207">
    <property type="term" value="P:negative regulation of pronephric nephron tubule development"/>
    <property type="evidence" value="ECO:0000315"/>
    <property type="project" value="UniProtKB"/>
</dbReference>
<dbReference type="GO" id="GO:0000122">
    <property type="term" value="P:negative regulation of transcription by RNA polymerase II"/>
    <property type="evidence" value="ECO:0000315"/>
    <property type="project" value="UniProtKB"/>
</dbReference>
<dbReference type="GO" id="GO:0030178">
    <property type="term" value="P:negative regulation of Wnt signaling pathway"/>
    <property type="evidence" value="ECO:0000316"/>
    <property type="project" value="UniProtKB"/>
</dbReference>
<dbReference type="GO" id="GO:0048793">
    <property type="term" value="P:pronephros development"/>
    <property type="evidence" value="ECO:0000315"/>
    <property type="project" value="UniProtKB"/>
</dbReference>
<dbReference type="GO" id="GO:0006357">
    <property type="term" value="P:regulation of transcription by RNA polymerase II"/>
    <property type="evidence" value="ECO:0000315"/>
    <property type="project" value="UniProtKB"/>
</dbReference>
<dbReference type="GO" id="GO:0039004">
    <property type="term" value="P:specification of pronephric proximal tubule identity"/>
    <property type="evidence" value="ECO:0000315"/>
    <property type="project" value="UniProtKB"/>
</dbReference>
<dbReference type="GO" id="GO:0016055">
    <property type="term" value="P:Wnt signaling pathway"/>
    <property type="evidence" value="ECO:0007669"/>
    <property type="project" value="UniProtKB-KW"/>
</dbReference>
<dbReference type="FunFam" id="3.30.160.60:FF:000460">
    <property type="entry name" value="Putative zinc finger protein 740"/>
    <property type="match status" value="1"/>
</dbReference>
<dbReference type="FunFam" id="3.30.160.60:FF:000228">
    <property type="entry name" value="Wilms tumor 1-KTS isoform"/>
    <property type="match status" value="1"/>
</dbReference>
<dbReference type="FunFam" id="3.30.160.60:FF:000241">
    <property type="entry name" value="Wilms tumor 1-KTS isoform"/>
    <property type="match status" value="1"/>
</dbReference>
<dbReference type="FunFam" id="3.30.160.60:FF:000072">
    <property type="entry name" value="zinc finger protein 143 isoform X1"/>
    <property type="match status" value="1"/>
</dbReference>
<dbReference type="Gene3D" id="3.30.160.60">
    <property type="entry name" value="Classic Zinc Finger"/>
    <property type="match status" value="4"/>
</dbReference>
<dbReference type="InterPro" id="IPR000976">
    <property type="entry name" value="Wilms_tumour_N"/>
</dbReference>
<dbReference type="InterPro" id="IPR036236">
    <property type="entry name" value="Znf_C2H2_sf"/>
</dbReference>
<dbReference type="InterPro" id="IPR013087">
    <property type="entry name" value="Znf_C2H2_type"/>
</dbReference>
<dbReference type="PANTHER" id="PTHR23235:SF65">
    <property type="entry name" value="KRUEPPEL-LIKE FACTOR 11"/>
    <property type="match status" value="1"/>
</dbReference>
<dbReference type="PANTHER" id="PTHR23235">
    <property type="entry name" value="KRUEPPEL-LIKE TRANSCRIPTION FACTOR"/>
    <property type="match status" value="1"/>
</dbReference>
<dbReference type="Pfam" id="PF02165">
    <property type="entry name" value="WT1"/>
    <property type="match status" value="1"/>
</dbReference>
<dbReference type="Pfam" id="PF00096">
    <property type="entry name" value="zf-C2H2"/>
    <property type="match status" value="3"/>
</dbReference>
<dbReference type="PRINTS" id="PR00049">
    <property type="entry name" value="WILMSTUMOUR"/>
</dbReference>
<dbReference type="SMART" id="SM00355">
    <property type="entry name" value="ZnF_C2H2"/>
    <property type="match status" value="4"/>
</dbReference>
<dbReference type="SUPFAM" id="SSF57667">
    <property type="entry name" value="beta-beta-alpha zinc fingers"/>
    <property type="match status" value="2"/>
</dbReference>
<dbReference type="PROSITE" id="PS00028">
    <property type="entry name" value="ZINC_FINGER_C2H2_1"/>
    <property type="match status" value="4"/>
</dbReference>
<dbReference type="PROSITE" id="PS50157">
    <property type="entry name" value="ZINC_FINGER_C2H2_2"/>
    <property type="match status" value="4"/>
</dbReference>
<reference evidence="16 17" key="1">
    <citation type="journal article" date="1996" name="Dev. Dyn.">
        <title>Wilms' tumor suppressor gene is involved in the development of disparate kidney forms: evidence from expression in the Xenopus pronephros.</title>
        <authorList>
            <person name="Carroll T.J."/>
            <person name="Vize P.D."/>
        </authorList>
    </citation>
    <scope>NUCLEOTIDE SEQUENCE [MRNA] (ISOFORM 2)</scope>
    <scope>TISSUE SPECIFICITY</scope>
    <scope>DEVELOPMENTAL STAGE</scope>
    <source>
        <tissue evidence="12">Mesonephros</tissue>
    </source>
</reference>
<reference evidence="16 18" key="2">
    <citation type="submission" date="2008-11" db="EMBL/GenBank/DDBJ databases">
        <authorList>
            <consortium name="NIH - Xenopus Gene Collection (XGC) project"/>
        </authorList>
    </citation>
    <scope>NUCLEOTIDE SEQUENCE [LARGE SCALE MRNA] (ISOFORM 1)</scope>
</reference>
<reference evidence="16 19" key="3">
    <citation type="journal article" date="1995" name="Oncogene">
        <title>The evolution of WT1 sequence and expression pattern in the vertebrates.</title>
        <authorList>
            <person name="Kent J."/>
            <person name="Coriat A.M."/>
            <person name="Sharpe P.T."/>
            <person name="Hastie N.D."/>
            <person name="van Heyningen V."/>
        </authorList>
    </citation>
    <scope>NUCLEOTIDE SEQUENCE [MRNA] OF 291-372 (ISOFORM 1/2)</scope>
    <scope>TISSUE SPECIFICITY</scope>
    <source>
        <tissue evidence="19">Mesonephros</tissue>
    </source>
</reference>
<reference evidence="16" key="4">
    <citation type="journal article" date="1998" name="Dev. Biol.">
        <title>Precocious expression of the Wilms' tumor gene xWT1 inhibits embryonic kidney development in Xenopus laevis.</title>
        <authorList>
            <person name="Wallingford J.B."/>
            <person name="Carroll T.J."/>
            <person name="Vize P.D."/>
        </authorList>
    </citation>
    <scope>FUNCTION</scope>
</reference>
<reference evidence="16" key="5">
    <citation type="journal article" date="1999" name="Development">
        <title>The specification and growth factor inducibility of the pronephric glomus in Xenopus laevis.</title>
        <authorList>
            <person name="Brennan H.C."/>
            <person name="Nijjar S."/>
            <person name="Jones E.A."/>
        </authorList>
    </citation>
    <scope>TISSUE SPECIFICITY</scope>
    <scope>DEVELOPMENTAL STAGE</scope>
    <scope>INDUCTION</scope>
</reference>
<reference evidence="16" key="6">
    <citation type="journal article" date="1999" name="Dev. Genet.">
        <title>Dynamic patterns of gene expression in the developing pronephros of Xenopus laevis.</title>
        <authorList>
            <person name="Carroll T.J."/>
            <person name="Wallingford J.B."/>
            <person name="Vize P.D."/>
        </authorList>
    </citation>
    <scope>TISSUE SPECIFICITY</scope>
</reference>
<reference evidence="16" key="7">
    <citation type="journal article" date="2006" name="Development">
        <title>The Notch-effector HRT1 gene plays a role in glomerular development and patterning of the Xenopus pronephros anlagen.</title>
        <authorList>
            <person name="Taelman V."/>
            <person name="Van Campenhout C."/>
            <person name="Soelter M."/>
            <person name="Pieler T."/>
            <person name="Bellefroid E.J."/>
        </authorList>
    </citation>
    <scope>FUNCTION</scope>
    <scope>TISSUE SPECIFICITY</scope>
</reference>
<reference evidence="16" key="8">
    <citation type="journal article" date="2006" name="Dev. Biol.">
        <title>Evi1 is specifically expressed in the distal tubule and duct of the Xenopus pronephros and plays a role in its formation.</title>
        <authorList>
            <person name="Van Campenhout C."/>
            <person name="Nichane M."/>
            <person name="Antoniou A."/>
            <person name="Pendeville H."/>
            <person name="Bronchain O.J."/>
            <person name="Marine J.C."/>
            <person name="Mazabraud A."/>
            <person name="Voz M.L."/>
            <person name="Bellefroid E.J."/>
        </authorList>
    </citation>
    <scope>FUNCTION</scope>
</reference>
<reference evidence="16" key="9">
    <citation type="journal article" date="2008" name="Dev. Biol.">
        <title>The lmx1b gene is pivotal in glomus development in Xenopus laevis.</title>
        <authorList>
            <person name="Haldin C.E."/>
            <person name="Masse K.L."/>
            <person name="Bhamra S."/>
            <person name="Simrick S."/>
            <person name="Kyuno J."/>
            <person name="Jones E.A."/>
        </authorList>
    </citation>
    <scope>TISSUE SPECIFICITY</scope>
    <scope>DEVELOPMENTAL STAGE</scope>
    <scope>INDUCTION</scope>
</reference>
<reference evidence="16" key="10">
    <citation type="journal article" date="2009" name="Proc. Natl. Acad. Sci. U.S.A.">
        <title>An integrated genome screen identifies the Wnt signaling pathway as a major target of WT1.</title>
        <authorList>
            <person name="Kim M.K."/>
            <person name="McGarry T.J."/>
            <person name="O'Broin P."/>
            <person name="Flatow J.M."/>
            <person name="Golden A.A."/>
            <person name="Licht J.D."/>
        </authorList>
    </citation>
    <scope>FUNCTION</scope>
</reference>
<feature type="chain" id="PRO_0000391387" description="Wilms tumor protein homolog A">
    <location>
        <begin position="1"/>
        <end position="414"/>
    </location>
</feature>
<feature type="zinc finger region" description="C2H2-type 1" evidence="4">
    <location>
        <begin position="288"/>
        <end position="312"/>
    </location>
</feature>
<feature type="zinc finger region" description="C2H2-type 2" evidence="4">
    <location>
        <begin position="318"/>
        <end position="342"/>
    </location>
</feature>
<feature type="zinc finger region" description="C2H2-type 3" evidence="4">
    <location>
        <begin position="348"/>
        <end position="370"/>
    </location>
</feature>
<feature type="zinc finger region" description="C2H2-type 4" evidence="4">
    <location>
        <begin position="379"/>
        <end position="403"/>
    </location>
</feature>
<feature type="region of interest" description="Important for interaction with target DNA" evidence="1">
    <location>
        <begin position="332"/>
        <end position="346"/>
    </location>
</feature>
<feature type="region of interest" description="Important for interaction with target DNA" evidence="1">
    <location>
        <begin position="358"/>
        <end position="366"/>
    </location>
</feature>
<feature type="short sequence motif" description="9aaTAD" evidence="1">
    <location>
        <begin position="217"/>
        <end position="225"/>
    </location>
</feature>
<feature type="short sequence motif" description="KTS motif" evidence="3">
    <location>
        <begin position="373"/>
        <end position="375"/>
    </location>
</feature>
<feature type="site" description="Important for interaction with target DNA" evidence="1">
    <location>
        <position position="389"/>
    </location>
</feature>
<feature type="site" description="Important for interaction with target DNA" evidence="1">
    <location>
        <position position="395"/>
    </location>
</feature>
<feature type="cross-link" description="Glycyl lysine isopeptide (Lys-Gly) (interchain with G-Cter in SUMO)" evidence="1">
    <location>
        <position position="55"/>
    </location>
</feature>
<feature type="cross-link" description="Glycyl lysine isopeptide (Lys-Gly) (interchain with G-Cter in SUMO)" evidence="1">
    <location>
        <position position="158"/>
    </location>
</feature>
<feature type="splice variant" id="VSP_038721" description="In isoform 2." evidence="15">
    <location>
        <begin position="373"/>
        <end position="375"/>
    </location>
</feature>
<feature type="sequence conflict" description="In Ref. 1; AAB53152." evidence="16" ref="1">
    <location>
        <position position="147"/>
    </location>
</feature>
<comment type="function">
    <text evidence="1 7 8 10 13">Transcription factor required for development of the vascular component of the pronephric kidney, the glomus; may repress tubule-specific gene expression in the portion of the pronephros fated to form the glomus. Recognizes and binds to the DNA sequence 5'-GCG(T/G)GGGCG-3' (By similarity). Inhibits Wnt-signaling during embryonic development. Function may be isoform-specific: the isoform containing the KTS motif is less effective in inhibiting wnt signaling.</text>
</comment>
<comment type="subcellular location">
    <subcellularLocation>
        <location evidence="2">Nucleus</location>
    </subcellularLocation>
    <subcellularLocation>
        <location evidence="2">Cytoplasm</location>
    </subcellularLocation>
    <subcellularLocation>
        <location evidence="2">Nucleus speckle</location>
    </subcellularLocation>
    <text evidence="2">Shuttles between nucleus and cytoplasm.</text>
</comment>
<comment type="alternative products">
    <event type="alternative splicing"/>
    <isoform>
        <id>B7ZSG3-1</id>
        <name>1</name>
        <sequence type="displayed"/>
    </isoform>
    <isoform>
        <id>B7ZSG3-2</id>
        <name evidence="12">2</name>
        <sequence type="described" ref="VSP_038721"/>
    </isoform>
</comment>
<comment type="tissue specificity">
    <text evidence="5 6 8 9 11 12">Expressed around the pronephric anlage and in the pronephros; expression is restricted to the splanchnic mesoderm (the site where the glomus forms) from tailbud stages, and the glomus of early tadpoles. Not expressed in the pronephric tubules or pronephric duct. In tadpoles (stage 38-39), additional expression begins in the heart. Also expressed in the adult kidney (mesonephros).</text>
</comment>
<comment type="developmental stage">
    <text evidence="6 9 12">Expression begins around stage 18 (late neurula).</text>
</comment>
<comment type="induction">
    <text evidence="6 9">By retinoic acid in combination with fgf. By lmx1b in combination with lhx1/lim1.</text>
</comment>
<comment type="domain">
    <text evidence="1">Binds to DNA motifs with the sequence 5'-GCG(T/G)GGGCG-3' via its C2H2-type zinc fingers. Starting from the N-terminus, the second zinc finger binds to the 3'-GCG motif, the middle zinc finger interacts with the central TGG motif, and the C-terminal zinc finger binds to the 5'-GCG motif. Binds double-stranded target DNA, irrespective of the cytosine methylation status. Has reduced affinity for target DNA where the cytosines have been oxidized to 5-hydroxymethylcytosine, 5-formylcytosine or 5-carboxylcytosine.</text>
</comment>
<comment type="domain">
    <text evidence="1">The 9aaTAD motif is a transactivation domain present in a large number of yeast and animal transcription factors.</text>
</comment>
<comment type="similarity">
    <text evidence="3">Belongs to the EGR C2H2-type zinc-finger protein family.</text>
</comment>
<comment type="sequence caution" evidence="16">
    <conflict type="frameshift">
        <sequence resource="EMBL-CDS" id="AAB53152"/>
    </conflict>
</comment>
<sequence>MGSDVRDMNLLPPVSSLSGNSSCNMPVSSSAQWAPVLDFPPGAPYSSLTPHSFIKQEPTWNPDPHEDQCLSAFTVHFSGQFTGTAGACRYGPFGAPTPSQATTGQARMFSNAPYLSNCLDNQQGMRNQGYSAVAFDGTPSYGHTPSHHTSQFTNHSFKHEDPLSQQTSLGEQQYSVPPPVYGCHTPTDTCTGSQALLLRTPYNSDNLYPMTSQLDCMTWNQMNLGSSLKSHGTSYENDSHSSPMLYNCGGQYRIHTHGVFRGIQDVRRVPGVTPAIVRSTEANEKRPFMCAYPGCNKRYFKLSHLQMHSRKHTGEKPYQCDFKDCERRFSRSDQLKRHQRRHTGIKPFQCKTCQRKFSRSDHLKTHTRTHTGKTSEKPFSCRWPSCQKKFARSDELVRHHNMHQRNMTKLQLAL</sequence>